<protein>
    <recommendedName>
        <fullName>Inter-alpha-trypsin inhibitor heavy chain H1</fullName>
        <shortName>ITI heavy chain H1</shortName>
        <shortName>ITI-HC1</shortName>
        <shortName>Inter-alpha-inhibitor heavy chain 1</shortName>
    </recommendedName>
    <alternativeName>
        <fullName>Inter-alpha-trypsin inhibitor complex component III</fullName>
    </alternativeName>
    <alternativeName>
        <fullName>Serum-derived hyaluronan-associated protein</fullName>
        <shortName>SHAP</shortName>
    </alternativeName>
</protein>
<dbReference type="EMBL" id="X63652">
    <property type="protein sequence ID" value="CAA45188.1"/>
    <property type="molecule type" value="mRNA"/>
</dbReference>
<dbReference type="EMBL" id="X69532">
    <property type="protein sequence ID" value="CAA49279.1"/>
    <property type="molecule type" value="Genomic_DNA"/>
</dbReference>
<dbReference type="EMBL" id="X69533">
    <property type="protein sequence ID" value="CAA49279.1"/>
    <property type="status" value="JOINED"/>
    <property type="molecule type" value="Genomic_DNA"/>
</dbReference>
<dbReference type="EMBL" id="X69534">
    <property type="protein sequence ID" value="CAA49279.1"/>
    <property type="status" value="JOINED"/>
    <property type="molecule type" value="Genomic_DNA"/>
</dbReference>
<dbReference type="EMBL" id="X69535">
    <property type="protein sequence ID" value="CAA49279.1"/>
    <property type="status" value="JOINED"/>
    <property type="molecule type" value="Genomic_DNA"/>
</dbReference>
<dbReference type="EMBL" id="X69536">
    <property type="protein sequence ID" value="CAA49279.1"/>
    <property type="status" value="JOINED"/>
    <property type="molecule type" value="Genomic_DNA"/>
</dbReference>
<dbReference type="EMBL" id="X69537">
    <property type="protein sequence ID" value="CAA49279.1"/>
    <property type="status" value="JOINED"/>
    <property type="molecule type" value="Genomic_DNA"/>
</dbReference>
<dbReference type="EMBL" id="X69538">
    <property type="protein sequence ID" value="CAA49279.1"/>
    <property type="status" value="JOINED"/>
    <property type="molecule type" value="Genomic_DNA"/>
</dbReference>
<dbReference type="EMBL" id="X69539">
    <property type="protein sequence ID" value="CAA49279.1"/>
    <property type="status" value="JOINED"/>
    <property type="molecule type" value="Genomic_DNA"/>
</dbReference>
<dbReference type="EMBL" id="X69540">
    <property type="protein sequence ID" value="CAA49279.1"/>
    <property type="status" value="JOINED"/>
    <property type="molecule type" value="Genomic_DNA"/>
</dbReference>
<dbReference type="EMBL" id="X69541">
    <property type="protein sequence ID" value="CAA49279.1"/>
    <property type="status" value="JOINED"/>
    <property type="molecule type" value="Genomic_DNA"/>
</dbReference>
<dbReference type="EMBL" id="X69542">
    <property type="protein sequence ID" value="CAA49279.1"/>
    <property type="status" value="JOINED"/>
    <property type="molecule type" value="Genomic_DNA"/>
</dbReference>
<dbReference type="EMBL" id="X69543">
    <property type="protein sequence ID" value="CAA49279.1"/>
    <property type="status" value="JOINED"/>
    <property type="molecule type" value="Genomic_DNA"/>
</dbReference>
<dbReference type="EMBL" id="X69544">
    <property type="protein sequence ID" value="CAA49279.1"/>
    <property type="status" value="JOINED"/>
    <property type="molecule type" value="Genomic_DNA"/>
</dbReference>
<dbReference type="EMBL" id="X69545">
    <property type="protein sequence ID" value="CAA49279.1"/>
    <property type="status" value="JOINED"/>
    <property type="molecule type" value="Genomic_DNA"/>
</dbReference>
<dbReference type="EMBL" id="X69546">
    <property type="protein sequence ID" value="CAA49279.1"/>
    <property type="status" value="JOINED"/>
    <property type="molecule type" value="Genomic_DNA"/>
</dbReference>
<dbReference type="EMBL" id="X69547">
    <property type="protein sequence ID" value="CAA49279.1"/>
    <property type="status" value="JOINED"/>
    <property type="molecule type" value="Genomic_DNA"/>
</dbReference>
<dbReference type="EMBL" id="AK292750">
    <property type="protein sequence ID" value="BAF85439.1"/>
    <property type="molecule type" value="mRNA"/>
</dbReference>
<dbReference type="EMBL" id="AK298455">
    <property type="protein sequence ID" value="BAH12794.1"/>
    <property type="molecule type" value="mRNA"/>
</dbReference>
<dbReference type="EMBL" id="AK303156">
    <property type="protein sequence ID" value="BAH13906.1"/>
    <property type="molecule type" value="mRNA"/>
</dbReference>
<dbReference type="EMBL" id="AK314198">
    <property type="protein sequence ID" value="BAG36876.1"/>
    <property type="molecule type" value="mRNA"/>
</dbReference>
<dbReference type="EMBL" id="AC006254">
    <property type="status" value="NOT_ANNOTATED_CDS"/>
    <property type="molecule type" value="Genomic_DNA"/>
</dbReference>
<dbReference type="EMBL" id="CH471055">
    <property type="protein sequence ID" value="EAW65259.1"/>
    <property type="molecule type" value="Genomic_DNA"/>
</dbReference>
<dbReference type="EMBL" id="BC069464">
    <property type="protein sequence ID" value="AAH69464.1"/>
    <property type="molecule type" value="mRNA"/>
</dbReference>
<dbReference type="EMBL" id="X16260">
    <property type="protein sequence ID" value="CAA34346.1"/>
    <property type="molecule type" value="mRNA"/>
</dbReference>
<dbReference type="EMBL" id="M18192">
    <property type="protein sequence ID" value="AAA60557.1"/>
    <property type="molecule type" value="mRNA"/>
</dbReference>
<dbReference type="EMBL" id="X75318">
    <property type="protein sequence ID" value="CAA53067.1"/>
    <property type="molecule type" value="Genomic_DNA"/>
</dbReference>
<dbReference type="CCDS" id="CCDS2864.1">
    <molecule id="P19827-1"/>
</dbReference>
<dbReference type="CCDS" id="CCDS54595.1">
    <molecule id="P19827-3"/>
</dbReference>
<dbReference type="PIR" id="S39527">
    <property type="entry name" value="A39967"/>
</dbReference>
<dbReference type="RefSeq" id="NP_001159906.1">
    <molecule id="P19827-2"/>
    <property type="nucleotide sequence ID" value="NM_001166434.3"/>
</dbReference>
<dbReference type="RefSeq" id="NP_001159907.1">
    <molecule id="P19827-3"/>
    <property type="nucleotide sequence ID" value="NM_001166435.2"/>
</dbReference>
<dbReference type="RefSeq" id="NP_001159908.1">
    <molecule id="P19827-3"/>
    <property type="nucleotide sequence ID" value="NM_001166436.2"/>
</dbReference>
<dbReference type="RefSeq" id="NP_002206.2">
    <molecule id="P19827-1"/>
    <property type="nucleotide sequence ID" value="NM_002215.4"/>
</dbReference>
<dbReference type="PDB" id="6FPY">
    <property type="method" value="X-ray"/>
    <property type="resolution" value="2.34 A"/>
    <property type="chains" value="A/B=35-672"/>
</dbReference>
<dbReference type="PDB" id="6FPZ">
    <property type="method" value="X-ray"/>
    <property type="resolution" value="2.20 A"/>
    <property type="chains" value="A/B=35-672"/>
</dbReference>
<dbReference type="PDBsum" id="6FPY"/>
<dbReference type="PDBsum" id="6FPZ"/>
<dbReference type="SMR" id="P19827"/>
<dbReference type="BioGRID" id="109903">
    <property type="interactions" value="25"/>
</dbReference>
<dbReference type="FunCoup" id="P19827">
    <property type="interactions" value="137"/>
</dbReference>
<dbReference type="IntAct" id="P19827">
    <property type="interactions" value="13"/>
</dbReference>
<dbReference type="STRING" id="9606.ENSP00000273283"/>
<dbReference type="DrugBank" id="DB09338">
    <property type="generic name" value="Mersalyl"/>
</dbReference>
<dbReference type="DrugBank" id="DB01593">
    <property type="generic name" value="Zinc"/>
</dbReference>
<dbReference type="DrugBank" id="DB14487">
    <property type="generic name" value="Zinc acetate"/>
</dbReference>
<dbReference type="DrugBank" id="DB14533">
    <property type="generic name" value="Zinc chloride"/>
</dbReference>
<dbReference type="DrugBank" id="DB14548">
    <property type="generic name" value="Zinc sulfate, unspecified form"/>
</dbReference>
<dbReference type="GlyConnect" id="284">
    <property type="glycosylation" value="17 N-Linked glycans (2 sites), 1 O-Linked glycan (1 site)"/>
</dbReference>
<dbReference type="GlyCosmos" id="P19827">
    <property type="glycosylation" value="7 sites, 21 glycans"/>
</dbReference>
<dbReference type="GlyGen" id="P19827">
    <property type="glycosylation" value="11 sites, 83 N-linked glycans (3 sites), 4 O-linked glycans (6 sites)"/>
</dbReference>
<dbReference type="iPTMnet" id="P19827"/>
<dbReference type="PhosphoSitePlus" id="P19827"/>
<dbReference type="SwissPalm" id="P19827"/>
<dbReference type="BioMuta" id="ITIH1"/>
<dbReference type="jPOST" id="P19827"/>
<dbReference type="MassIVE" id="P19827"/>
<dbReference type="PaxDb" id="9606-ENSP00000273283"/>
<dbReference type="PeptideAtlas" id="P19827"/>
<dbReference type="ProteomicsDB" id="25555"/>
<dbReference type="ProteomicsDB" id="27630"/>
<dbReference type="ProteomicsDB" id="53691">
    <molecule id="P19827-1"/>
</dbReference>
<dbReference type="Antibodypedia" id="31337">
    <property type="antibodies" value="278 antibodies from 24 providers"/>
</dbReference>
<dbReference type="DNASU" id="3697"/>
<dbReference type="Ensembl" id="ENST00000273283.7">
    <molecule id="P19827-1"/>
    <property type="protein sequence ID" value="ENSP00000273283.2"/>
    <property type="gene ID" value="ENSG00000055957.11"/>
</dbReference>
<dbReference type="Ensembl" id="ENST00000537050.5">
    <molecule id="P19827-3"/>
    <property type="protein sequence ID" value="ENSP00000443847.1"/>
    <property type="gene ID" value="ENSG00000055957.11"/>
</dbReference>
<dbReference type="GeneID" id="3697"/>
<dbReference type="KEGG" id="hsa:3697"/>
<dbReference type="MANE-Select" id="ENST00000273283.7">
    <property type="protein sequence ID" value="ENSP00000273283.2"/>
    <property type="RefSeq nucleotide sequence ID" value="NM_002215.4"/>
    <property type="RefSeq protein sequence ID" value="NP_002206.2"/>
</dbReference>
<dbReference type="UCSC" id="uc003dfs.4">
    <molecule id="P19827-1"/>
    <property type="organism name" value="human"/>
</dbReference>
<dbReference type="AGR" id="HGNC:6166"/>
<dbReference type="CTD" id="3697"/>
<dbReference type="DisGeNET" id="3697"/>
<dbReference type="GeneCards" id="ITIH1"/>
<dbReference type="HGNC" id="HGNC:6166">
    <property type="gene designation" value="ITIH1"/>
</dbReference>
<dbReference type="HPA" id="ENSG00000055957">
    <property type="expression patterns" value="Tissue enriched (liver)"/>
</dbReference>
<dbReference type="MIM" id="147270">
    <property type="type" value="gene"/>
</dbReference>
<dbReference type="neXtProt" id="NX_P19827"/>
<dbReference type="OpenTargets" id="ENSG00000055957"/>
<dbReference type="PharmGKB" id="PA29964"/>
<dbReference type="VEuPathDB" id="HostDB:ENSG00000055957"/>
<dbReference type="eggNOG" id="ENOG502RXR2">
    <property type="taxonomic scope" value="Eukaryota"/>
</dbReference>
<dbReference type="GeneTree" id="ENSGT00940000162180"/>
<dbReference type="HOGENOM" id="CLU_008101_0_0_1"/>
<dbReference type="InParanoid" id="P19827"/>
<dbReference type="OMA" id="QEFRTTC"/>
<dbReference type="OrthoDB" id="299997at2759"/>
<dbReference type="PAN-GO" id="P19827">
    <property type="GO annotations" value="0 GO annotations based on evolutionary models"/>
</dbReference>
<dbReference type="PhylomeDB" id="P19827"/>
<dbReference type="TreeFam" id="TF328982"/>
<dbReference type="PathwayCommons" id="P19827"/>
<dbReference type="SignaLink" id="P19827"/>
<dbReference type="BioGRID-ORCS" id="3697">
    <property type="hits" value="12 hits in 1148 CRISPR screens"/>
</dbReference>
<dbReference type="ChiTaRS" id="ITIH1">
    <property type="organism name" value="human"/>
</dbReference>
<dbReference type="GeneWiki" id="ITIH1"/>
<dbReference type="GenomeRNAi" id="3697"/>
<dbReference type="Pharos" id="P19827">
    <property type="development level" value="Tbio"/>
</dbReference>
<dbReference type="PRO" id="PR:P19827"/>
<dbReference type="Proteomes" id="UP000005640">
    <property type="component" value="Chromosome 3"/>
</dbReference>
<dbReference type="RNAct" id="P19827">
    <property type="molecule type" value="protein"/>
</dbReference>
<dbReference type="Bgee" id="ENSG00000055957">
    <property type="expression patterns" value="Expressed in right lobe of liver and 113 other cell types or tissues"/>
</dbReference>
<dbReference type="ExpressionAtlas" id="P19827">
    <property type="expression patterns" value="baseline and differential"/>
</dbReference>
<dbReference type="GO" id="GO:0072562">
    <property type="term" value="C:blood microparticle"/>
    <property type="evidence" value="ECO:0007005"/>
    <property type="project" value="UniProtKB"/>
</dbReference>
<dbReference type="GO" id="GO:0062023">
    <property type="term" value="C:collagen-containing extracellular matrix"/>
    <property type="evidence" value="ECO:0007005"/>
    <property type="project" value="BHF-UCL"/>
</dbReference>
<dbReference type="GO" id="GO:0070062">
    <property type="term" value="C:extracellular exosome"/>
    <property type="evidence" value="ECO:0007005"/>
    <property type="project" value="UniProtKB"/>
</dbReference>
<dbReference type="GO" id="GO:0005576">
    <property type="term" value="C:extracellular region"/>
    <property type="evidence" value="ECO:0000303"/>
    <property type="project" value="UniProtKB"/>
</dbReference>
<dbReference type="GO" id="GO:0005509">
    <property type="term" value="F:calcium ion binding"/>
    <property type="evidence" value="ECO:0000304"/>
    <property type="project" value="ProtInc"/>
</dbReference>
<dbReference type="GO" id="GO:0030246">
    <property type="term" value="F:carbohydrate binding"/>
    <property type="evidence" value="ECO:0000269"/>
    <property type="project" value="DisProt"/>
</dbReference>
<dbReference type="GO" id="GO:0005540">
    <property type="term" value="F:hyaluronic acid binding"/>
    <property type="evidence" value="ECO:0000314"/>
    <property type="project" value="UniProtKB"/>
</dbReference>
<dbReference type="GO" id="GO:0004867">
    <property type="term" value="F:serine-type endopeptidase inhibitor activity"/>
    <property type="evidence" value="ECO:0007669"/>
    <property type="project" value="UniProtKB-KW"/>
</dbReference>
<dbReference type="GO" id="GO:0030212">
    <property type="term" value="P:hyaluronan metabolic process"/>
    <property type="evidence" value="ECO:0007669"/>
    <property type="project" value="InterPro"/>
</dbReference>
<dbReference type="CDD" id="cd01461">
    <property type="entry name" value="vWA_interalpha_trypsin_inhibitor"/>
    <property type="match status" value="1"/>
</dbReference>
<dbReference type="FunFam" id="3.40.50.410:FF:000013">
    <property type="entry name" value="inter-alpha-trypsin inhibitor heavy chain H2"/>
    <property type="match status" value="1"/>
</dbReference>
<dbReference type="Gene3D" id="3.40.50.410">
    <property type="entry name" value="von Willebrand factor, type A domain"/>
    <property type="match status" value="1"/>
</dbReference>
<dbReference type="InterPro" id="IPR010600">
    <property type="entry name" value="ITI_HC_C"/>
</dbReference>
<dbReference type="InterPro" id="IPR050934">
    <property type="entry name" value="ITIH"/>
</dbReference>
<dbReference type="InterPro" id="IPR013694">
    <property type="entry name" value="VIT"/>
</dbReference>
<dbReference type="InterPro" id="IPR002035">
    <property type="entry name" value="VWF_A"/>
</dbReference>
<dbReference type="InterPro" id="IPR036465">
    <property type="entry name" value="vWFA_dom_sf"/>
</dbReference>
<dbReference type="PANTHER" id="PTHR10338">
    <property type="entry name" value="INTER-ALPHA-TRYPSIN INHIBITOR HEAVY CHAIN FAMILY MEMBER"/>
    <property type="match status" value="1"/>
</dbReference>
<dbReference type="PANTHER" id="PTHR10338:SF106">
    <property type="entry name" value="INTER-ALPHA-TRYPSIN INHIBITOR HEAVY CHAIN H1"/>
    <property type="match status" value="1"/>
</dbReference>
<dbReference type="Pfam" id="PF06668">
    <property type="entry name" value="ITI_HC_C"/>
    <property type="match status" value="1"/>
</dbReference>
<dbReference type="Pfam" id="PF08487">
    <property type="entry name" value="VIT"/>
    <property type="match status" value="1"/>
</dbReference>
<dbReference type="Pfam" id="PF00092">
    <property type="entry name" value="VWA"/>
    <property type="match status" value="1"/>
</dbReference>
<dbReference type="SMART" id="SM00609">
    <property type="entry name" value="VIT"/>
    <property type="match status" value="1"/>
</dbReference>
<dbReference type="SMART" id="SM00327">
    <property type="entry name" value="VWA"/>
    <property type="match status" value="1"/>
</dbReference>
<dbReference type="SUPFAM" id="SSF53300">
    <property type="entry name" value="vWA-like"/>
    <property type="match status" value="1"/>
</dbReference>
<dbReference type="PROSITE" id="PS51468">
    <property type="entry name" value="VIT"/>
    <property type="match status" value="1"/>
</dbReference>
<dbReference type="PROSITE" id="PS50234">
    <property type="entry name" value="VWFA"/>
    <property type="match status" value="1"/>
</dbReference>
<accession>P19827</accession>
<accession>A8K9N5</accession>
<accession>B2RAH9</accession>
<accession>B7Z558</accession>
<accession>B7Z8C0</accession>
<accession>F5H165</accession>
<accession>F5H7Y8</accession>
<accession>P78455</accession>
<accession>Q01746</accession>
<accession>Q562G1</accession>
<reference key="1">
    <citation type="journal article" date="1992" name="Biochim. Biophys. Acta">
        <title>Human inter-alpha-trypsin inhibitor: full-length cDNA sequence of the heavy chain H1.</title>
        <authorList>
            <person name="Diarra-Mehrpour M."/>
            <person name="Bourguignon J."/>
            <person name="Bost F."/>
            <person name="Sesboue R."/>
            <person name="Muschio F."/>
            <person name="Sarafan N."/>
            <person name="Martin J.-P."/>
        </authorList>
    </citation>
    <scope>NUCLEOTIDE SEQUENCE [MRNA] (ISOFORM 1)</scope>
    <scope>VARIANTS THR-263; VAL-585 AND ARG-595</scope>
    <source>
        <tissue>Blood</tissue>
        <tissue>Liver</tissue>
    </source>
</reference>
<reference key="2">
    <citation type="journal article" date="1993" name="Eur. J. Biochem.">
        <title>Isolation and characterization of the human inter-alpha-trypsin inhibitor heavy-chain H1 gene.</title>
        <authorList>
            <person name="Bost F."/>
            <person name="Bourguignon J."/>
            <person name="Martin J.-P."/>
            <person name="Sesboue R."/>
            <person name="Thiberville L."/>
            <person name="Diarra-Mehrpour M."/>
        </authorList>
    </citation>
    <scope>NUCLEOTIDE SEQUENCE [GENOMIC DNA]</scope>
</reference>
<reference key="3">
    <citation type="journal article" date="2004" name="Nat. Genet.">
        <title>Complete sequencing and characterization of 21,243 full-length human cDNAs.</title>
        <authorList>
            <person name="Ota T."/>
            <person name="Suzuki Y."/>
            <person name="Nishikawa T."/>
            <person name="Otsuki T."/>
            <person name="Sugiyama T."/>
            <person name="Irie R."/>
            <person name="Wakamatsu A."/>
            <person name="Hayashi K."/>
            <person name="Sato H."/>
            <person name="Nagai K."/>
            <person name="Kimura K."/>
            <person name="Makita H."/>
            <person name="Sekine M."/>
            <person name="Obayashi M."/>
            <person name="Nishi T."/>
            <person name="Shibahara T."/>
            <person name="Tanaka T."/>
            <person name="Ishii S."/>
            <person name="Yamamoto J."/>
            <person name="Saito K."/>
            <person name="Kawai Y."/>
            <person name="Isono Y."/>
            <person name="Nakamura Y."/>
            <person name="Nagahari K."/>
            <person name="Murakami K."/>
            <person name="Yasuda T."/>
            <person name="Iwayanagi T."/>
            <person name="Wagatsuma M."/>
            <person name="Shiratori A."/>
            <person name="Sudo H."/>
            <person name="Hosoiri T."/>
            <person name="Kaku Y."/>
            <person name="Kodaira H."/>
            <person name="Kondo H."/>
            <person name="Sugawara M."/>
            <person name="Takahashi M."/>
            <person name="Kanda K."/>
            <person name="Yokoi T."/>
            <person name="Furuya T."/>
            <person name="Kikkawa E."/>
            <person name="Omura Y."/>
            <person name="Abe K."/>
            <person name="Kamihara K."/>
            <person name="Katsuta N."/>
            <person name="Sato K."/>
            <person name="Tanikawa M."/>
            <person name="Yamazaki M."/>
            <person name="Ninomiya K."/>
            <person name="Ishibashi T."/>
            <person name="Yamashita H."/>
            <person name="Murakawa K."/>
            <person name="Fujimori K."/>
            <person name="Tanai H."/>
            <person name="Kimata M."/>
            <person name="Watanabe M."/>
            <person name="Hiraoka S."/>
            <person name="Chiba Y."/>
            <person name="Ishida S."/>
            <person name="Ono Y."/>
            <person name="Takiguchi S."/>
            <person name="Watanabe S."/>
            <person name="Yosida M."/>
            <person name="Hotuta T."/>
            <person name="Kusano J."/>
            <person name="Kanehori K."/>
            <person name="Takahashi-Fujii A."/>
            <person name="Hara H."/>
            <person name="Tanase T.-O."/>
            <person name="Nomura Y."/>
            <person name="Togiya S."/>
            <person name="Komai F."/>
            <person name="Hara R."/>
            <person name="Takeuchi K."/>
            <person name="Arita M."/>
            <person name="Imose N."/>
            <person name="Musashino K."/>
            <person name="Yuuki H."/>
            <person name="Oshima A."/>
            <person name="Sasaki N."/>
            <person name="Aotsuka S."/>
            <person name="Yoshikawa Y."/>
            <person name="Matsunawa H."/>
            <person name="Ichihara T."/>
            <person name="Shiohata N."/>
            <person name="Sano S."/>
            <person name="Moriya S."/>
            <person name="Momiyama H."/>
            <person name="Satoh N."/>
            <person name="Takami S."/>
            <person name="Terashima Y."/>
            <person name="Suzuki O."/>
            <person name="Nakagawa S."/>
            <person name="Senoh A."/>
            <person name="Mizoguchi H."/>
            <person name="Goto Y."/>
            <person name="Shimizu F."/>
            <person name="Wakebe H."/>
            <person name="Hishigaki H."/>
            <person name="Watanabe T."/>
            <person name="Sugiyama A."/>
            <person name="Takemoto M."/>
            <person name="Kawakami B."/>
            <person name="Yamazaki M."/>
            <person name="Watanabe K."/>
            <person name="Kumagai A."/>
            <person name="Itakura S."/>
            <person name="Fukuzumi Y."/>
            <person name="Fujimori Y."/>
            <person name="Komiyama M."/>
            <person name="Tashiro H."/>
            <person name="Tanigami A."/>
            <person name="Fujiwara T."/>
            <person name="Ono T."/>
            <person name="Yamada K."/>
            <person name="Fujii Y."/>
            <person name="Ozaki K."/>
            <person name="Hirao M."/>
            <person name="Ohmori Y."/>
            <person name="Kawabata A."/>
            <person name="Hikiji T."/>
            <person name="Kobatake N."/>
            <person name="Inagaki H."/>
            <person name="Ikema Y."/>
            <person name="Okamoto S."/>
            <person name="Okitani R."/>
            <person name="Kawakami T."/>
            <person name="Noguchi S."/>
            <person name="Itoh T."/>
            <person name="Shigeta K."/>
            <person name="Senba T."/>
            <person name="Matsumura K."/>
            <person name="Nakajima Y."/>
            <person name="Mizuno T."/>
            <person name="Morinaga M."/>
            <person name="Sasaki M."/>
            <person name="Togashi T."/>
            <person name="Oyama M."/>
            <person name="Hata H."/>
            <person name="Watanabe M."/>
            <person name="Komatsu T."/>
            <person name="Mizushima-Sugano J."/>
            <person name="Satoh T."/>
            <person name="Shirai Y."/>
            <person name="Takahashi Y."/>
            <person name="Nakagawa K."/>
            <person name="Okumura K."/>
            <person name="Nagase T."/>
            <person name="Nomura N."/>
            <person name="Kikuchi H."/>
            <person name="Masuho Y."/>
            <person name="Yamashita R."/>
            <person name="Nakai K."/>
            <person name="Yada T."/>
            <person name="Nakamura Y."/>
            <person name="Ohara O."/>
            <person name="Isogai T."/>
            <person name="Sugano S."/>
        </authorList>
    </citation>
    <scope>NUCLEOTIDE SEQUENCE [LARGE SCALE MRNA] (ISOFORMS 1; 2 AND 3)</scope>
    <scope>VARIANTS VAL-585 AND ARG-595</scope>
    <source>
        <tissue>Liver</tissue>
        <tissue>Thymus</tissue>
    </source>
</reference>
<reference key="4">
    <citation type="journal article" date="2006" name="Nature">
        <title>The DNA sequence, annotation and analysis of human chromosome 3.</title>
        <authorList>
            <person name="Muzny D.M."/>
            <person name="Scherer S.E."/>
            <person name="Kaul R."/>
            <person name="Wang J."/>
            <person name="Yu J."/>
            <person name="Sudbrak R."/>
            <person name="Buhay C.J."/>
            <person name="Chen R."/>
            <person name="Cree A."/>
            <person name="Ding Y."/>
            <person name="Dugan-Rocha S."/>
            <person name="Gill R."/>
            <person name="Gunaratne P."/>
            <person name="Harris R.A."/>
            <person name="Hawes A.C."/>
            <person name="Hernandez J."/>
            <person name="Hodgson A.V."/>
            <person name="Hume J."/>
            <person name="Jackson A."/>
            <person name="Khan Z.M."/>
            <person name="Kovar-Smith C."/>
            <person name="Lewis L.R."/>
            <person name="Lozado R.J."/>
            <person name="Metzker M.L."/>
            <person name="Milosavljevic A."/>
            <person name="Miner G.R."/>
            <person name="Morgan M.B."/>
            <person name="Nazareth L.V."/>
            <person name="Scott G."/>
            <person name="Sodergren E."/>
            <person name="Song X.-Z."/>
            <person name="Steffen D."/>
            <person name="Wei S."/>
            <person name="Wheeler D.A."/>
            <person name="Wright M.W."/>
            <person name="Worley K.C."/>
            <person name="Yuan Y."/>
            <person name="Zhang Z."/>
            <person name="Adams C.Q."/>
            <person name="Ansari-Lari M.A."/>
            <person name="Ayele M."/>
            <person name="Brown M.J."/>
            <person name="Chen G."/>
            <person name="Chen Z."/>
            <person name="Clendenning J."/>
            <person name="Clerc-Blankenburg K.P."/>
            <person name="Chen R."/>
            <person name="Chen Z."/>
            <person name="Davis C."/>
            <person name="Delgado O."/>
            <person name="Dinh H.H."/>
            <person name="Dong W."/>
            <person name="Draper H."/>
            <person name="Ernst S."/>
            <person name="Fu G."/>
            <person name="Gonzalez-Garay M.L."/>
            <person name="Garcia D.K."/>
            <person name="Gillett W."/>
            <person name="Gu J."/>
            <person name="Hao B."/>
            <person name="Haugen E."/>
            <person name="Havlak P."/>
            <person name="He X."/>
            <person name="Hennig S."/>
            <person name="Hu S."/>
            <person name="Huang W."/>
            <person name="Jackson L.R."/>
            <person name="Jacob L.S."/>
            <person name="Kelly S.H."/>
            <person name="Kube M."/>
            <person name="Levy R."/>
            <person name="Li Z."/>
            <person name="Liu B."/>
            <person name="Liu J."/>
            <person name="Liu W."/>
            <person name="Lu J."/>
            <person name="Maheshwari M."/>
            <person name="Nguyen B.-V."/>
            <person name="Okwuonu G.O."/>
            <person name="Palmeiri A."/>
            <person name="Pasternak S."/>
            <person name="Perez L.M."/>
            <person name="Phelps K.A."/>
            <person name="Plopper F.J."/>
            <person name="Qiang B."/>
            <person name="Raymond C."/>
            <person name="Rodriguez R."/>
            <person name="Saenphimmachak C."/>
            <person name="Santibanez J."/>
            <person name="Shen H."/>
            <person name="Shen Y."/>
            <person name="Subramanian S."/>
            <person name="Tabor P.E."/>
            <person name="Verduzco D."/>
            <person name="Waldron L."/>
            <person name="Wang J."/>
            <person name="Wang J."/>
            <person name="Wang Q."/>
            <person name="Williams G.A."/>
            <person name="Wong G.K.-S."/>
            <person name="Yao Z."/>
            <person name="Zhang J."/>
            <person name="Zhang X."/>
            <person name="Zhao G."/>
            <person name="Zhou J."/>
            <person name="Zhou Y."/>
            <person name="Nelson D."/>
            <person name="Lehrach H."/>
            <person name="Reinhardt R."/>
            <person name="Naylor S.L."/>
            <person name="Yang H."/>
            <person name="Olson M."/>
            <person name="Weinstock G."/>
            <person name="Gibbs R.A."/>
        </authorList>
    </citation>
    <scope>NUCLEOTIDE SEQUENCE [LARGE SCALE GENOMIC DNA]</scope>
</reference>
<reference key="5">
    <citation type="submission" date="2005-07" db="EMBL/GenBank/DDBJ databases">
        <authorList>
            <person name="Mural R.J."/>
            <person name="Istrail S."/>
            <person name="Sutton G.G."/>
            <person name="Florea L."/>
            <person name="Halpern A.L."/>
            <person name="Mobarry C.M."/>
            <person name="Lippert R."/>
            <person name="Walenz B."/>
            <person name="Shatkay H."/>
            <person name="Dew I."/>
            <person name="Miller J.R."/>
            <person name="Flanigan M.J."/>
            <person name="Edwards N.J."/>
            <person name="Bolanos R."/>
            <person name="Fasulo D."/>
            <person name="Halldorsson B.V."/>
            <person name="Hannenhalli S."/>
            <person name="Turner R."/>
            <person name="Yooseph S."/>
            <person name="Lu F."/>
            <person name="Nusskern D.R."/>
            <person name="Shue B.C."/>
            <person name="Zheng X.H."/>
            <person name="Zhong F."/>
            <person name="Delcher A.L."/>
            <person name="Huson D.H."/>
            <person name="Kravitz S.A."/>
            <person name="Mouchard L."/>
            <person name="Reinert K."/>
            <person name="Remington K.A."/>
            <person name="Clark A.G."/>
            <person name="Waterman M.S."/>
            <person name="Eichler E.E."/>
            <person name="Adams M.D."/>
            <person name="Hunkapiller M.W."/>
            <person name="Myers E.W."/>
            <person name="Venter J.C."/>
        </authorList>
    </citation>
    <scope>NUCLEOTIDE SEQUENCE [LARGE SCALE GENOMIC DNA]</scope>
</reference>
<reference key="6">
    <citation type="journal article" date="2004" name="Genome Res.">
        <title>The status, quality, and expansion of the NIH full-length cDNA project: the Mammalian Gene Collection (MGC).</title>
        <authorList>
            <consortium name="The MGC Project Team"/>
        </authorList>
    </citation>
    <scope>NUCLEOTIDE SEQUENCE [LARGE SCALE MRNA] (ISOFORM 1)</scope>
</reference>
<reference key="7">
    <citation type="journal article" date="1992" name="Biol. Chem. Hoppe-Seyler">
        <title>The heavy chains of human plasma inter-alpha-trypsin inhibitor: their isolation, their identification by electrophoresis and partial sequencing. Differential reactivity with concanavalin A.</title>
        <authorList>
            <person name="Malki N."/>
            <person name="Balduyck M."/>
            <person name="Maes P."/>
            <person name="Capon C."/>
            <person name="Mizon C."/>
            <person name="Han K.K."/>
            <person name="Tartar A."/>
            <person name="Fournet B."/>
            <person name="Mizon J."/>
        </authorList>
    </citation>
    <scope>PROTEIN SEQUENCE OF 30-34; 117-119; 126-137; 318-329; 342-355 AND 478-501</scope>
    <source>
        <tissue>Plasma</tissue>
    </source>
</reference>
<reference key="8">
    <citation type="journal article" date="1989" name="J. Biol. Chem.">
        <title>Analysis of inter-alpha-trypsin inhibitor and a novel trypsin inhibitor, pre-alpha-trypsin inhibitor, from human plasma. Polypeptide chain stoichiometry and assembly by glycan.</title>
        <authorList>
            <person name="Enghild J.J."/>
            <person name="Thoegersen I.B."/>
            <person name="Pizzo S.V."/>
            <person name="Salvesen G."/>
        </authorList>
    </citation>
    <scope>PROTEIN SEQUENCE OF 35-54; 110-124; 333-347 AND 399-435</scope>
    <scope>IDENTIFICATION IN INTER-ALPHA-INHIBITOR COMPLEX</scope>
    <scope>IDENTIFICATION BY MASS SPECTROMETRY</scope>
    <source>
        <tissue>Plasma</tissue>
    </source>
</reference>
<reference key="9">
    <citation type="journal article" date="1989" name="Eur. J. Biochem.">
        <title>Two out of the three kinds of subunits of inter-alpha-trypsin inhibitor are structurally related.</title>
        <authorList>
            <person name="Gebhard W."/>
            <person name="Schreitmueller T."/>
            <person name="Hochstrasser K."/>
            <person name="Wachter E."/>
        </authorList>
    </citation>
    <scope>NUCLEOTIDE SEQUENCE [MRNA] OF 75-911 (ISOFORM 1)</scope>
    <scope>PARTIAL PROTEIN SEQUENCE</scope>
    <source>
        <tissue>Liver</tissue>
    </source>
</reference>
<reference key="10">
    <citation type="journal article" date="1993" name="J. Biol. Chem.">
        <title>A serum-derived hyaluronan-associated protein (SHAP) is the heavy chain of the inter alpha-trypsin inhibitor.</title>
        <authorList>
            <person name="Huang L."/>
            <person name="Yoneda M."/>
            <person name="Kimata K."/>
        </authorList>
    </citation>
    <scope>PROTEIN SEQUENCE OF 177-211 AND 387-428</scope>
    <scope>HYALURONAN BINDING</scope>
    <source>
        <tissue>Serum</tissue>
    </source>
</reference>
<reference key="11">
    <citation type="journal article" date="1987" name="Proc. Natl. Acad. Sci. U.S.A.">
        <title>Isolation and characterization of cDNAs encoding the heavy chain of human inter-alpha-trypsin inhibitor (I alpha TI): unambiguous evidence for multipolypeptide chain structure of I alpha TI.</title>
        <authorList>
            <person name="Salier J.-P."/>
            <person name="Diarra-Mehrpour M."/>
            <person name="Sesboue R."/>
            <person name="Bourguignon J."/>
            <person name="Benarous R."/>
            <person name="Ohkubo I."/>
            <person name="Kurachi S."/>
            <person name="Kurachi K."/>
            <person name="Martin J.-P."/>
        </authorList>
    </citation>
    <scope>NUCLEOTIDE SEQUENCE [MRNA] OF 399-723 (ISOFORM 1/2/3)</scope>
</reference>
<reference key="12">
    <citation type="journal article" date="1987" name="Biol. Chem. Hoppe-Seyler">
        <title>cDNA cloning of human inter-alpha-trypsin inhibitor discloses three different proteins.</title>
        <authorList>
            <person name="Schreitmueller T."/>
            <person name="Hochstrasser K."/>
            <person name="Resinger P.W.M."/>
            <person name="Wachter E."/>
            <person name="Gebhard W."/>
        </authorList>
    </citation>
    <scope>NUCLEOTIDE SEQUENCE [MRNA] OF 535-685 (ISOFORM 1/2/3)</scope>
</reference>
<reference key="13">
    <citation type="journal article" date="1994" name="Eur. J. Biochem.">
        <title>Chondroitin sulphate covalently cross-links the three polypeptide chains of inter-alpha-trypsin inhibitor.</title>
        <authorList>
            <person name="Morelle W."/>
            <person name="Capon C."/>
            <person name="Balduyck M."/>
            <person name="Sautiere P."/>
            <person name="Kouach M."/>
            <person name="Michalski C."/>
            <person name="Fournet B."/>
            <person name="Mizon J."/>
        </authorList>
    </citation>
    <scope>PROTEIN SEQUENCE OF 669-672</scope>
    <scope>COVALENT LINKAGE WITH CHONDROITIN SULFATE</scope>
    <source>
        <tissue>Plasma</tissue>
    </source>
</reference>
<reference key="14">
    <citation type="journal article" date="1994" name="Biochim. Biophys. Acta">
        <title>Tandem orientation of the inter-alpha-trypsin inhibitor heavy chain H1 and H3 genes.</title>
        <authorList>
            <person name="Diarra-Mehrpour M."/>
            <person name="Bourguignon J."/>
            <person name="Sarafan N."/>
            <person name="Bost F."/>
            <person name="Sesbouee R."/>
            <person name="Muschio-Bonnet F."/>
            <person name="Martin J.-P."/>
        </authorList>
    </citation>
    <scope>NUCLEOTIDE SEQUENCE [GENOMIC DNA] OF 870-911</scope>
</reference>
<reference key="15">
    <citation type="journal article" date="1998" name="Biochem. J.">
        <title>Glycosylation pattern of human inter-alpha-inhibitor heavy chains.</title>
        <authorList>
            <person name="Flahaut C."/>
            <person name="Capon C."/>
            <person name="Balduyck M."/>
            <person name="Ricart G."/>
            <person name="Sautiere P."/>
            <person name="Mizon J."/>
        </authorList>
    </citation>
    <scope>GLYCOSYLATION AT ASN-285 AND ASN-588</scope>
    <scope>MASS SPECTROMETRY</scope>
</reference>
<reference key="16">
    <citation type="journal article" date="1998" name="Biochemistry">
        <title>Posttranslational modifications of human inter-alpha-inhibitor: identification of glycans and disulfide bridges in heavy chains 1 and 2.</title>
        <authorList>
            <person name="Olsen E.H.N."/>
            <person name="Rahbek-Nielsen H."/>
            <person name="Thoegersen I.B."/>
            <person name="Roepstorff P."/>
            <person name="Enghild J.J."/>
        </authorList>
    </citation>
    <scope>GLYCOSYLATION AT CYS-60; ASN-285; ASN-588 AND THR-653</scope>
    <scope>DISULFIDE BONDS</scope>
    <scope>IDENTIFICATION BY MASS SPECTROMETRY</scope>
</reference>
<reference key="17">
    <citation type="journal article" date="2003" name="Nat. Biotechnol.">
        <title>Identification and quantification of N-linked glycoproteins using hydrazide chemistry, stable isotope labeling and mass spectrometry.</title>
        <authorList>
            <person name="Zhang H."/>
            <person name="Li X.-J."/>
            <person name="Martin D.B."/>
            <person name="Aebersold R."/>
        </authorList>
    </citation>
    <scope>GLYCOSYLATION AT ASN-285</scope>
</reference>
<reference key="18">
    <citation type="journal article" date="2004" name="Proteomics">
        <title>Screening for N-glycosylated proteins by liquid chromatography mass spectrometry.</title>
        <authorList>
            <person name="Bunkenborg J."/>
            <person name="Pilch B.J."/>
            <person name="Podtelejnikov A.V."/>
            <person name="Wisniewski J.R."/>
        </authorList>
    </citation>
    <scope>GLYCOSYLATION [LARGE SCALE ANALYSIS] AT ASN-588</scope>
    <source>
        <tissue>Plasma</tissue>
    </source>
</reference>
<reference key="19">
    <citation type="journal article" date="2008" name="Proc. Natl. Acad. Sci. U.S.A.">
        <title>A quantitative atlas of mitotic phosphorylation.</title>
        <authorList>
            <person name="Dephoure N."/>
            <person name="Zhou C."/>
            <person name="Villen J."/>
            <person name="Beausoleil S.A."/>
            <person name="Bakalarski C.E."/>
            <person name="Elledge S.J."/>
            <person name="Gygi S.P."/>
        </authorList>
    </citation>
    <scope>PHOSPHORYLATION [LARGE SCALE ANALYSIS] AT THR-402 AND THR-407</scope>
    <scope>IDENTIFICATION BY MASS SPECTROMETRY [LARGE SCALE ANALYSIS]</scope>
    <source>
        <tissue>Cervix carcinoma</tissue>
    </source>
</reference>
<reference key="20">
    <citation type="journal article" date="2009" name="J. Proteome Res.">
        <title>Glycoproteomics analysis of human liver tissue by combination of multiple enzyme digestion and hydrazide chemistry.</title>
        <authorList>
            <person name="Chen R."/>
            <person name="Jiang X."/>
            <person name="Sun D."/>
            <person name="Han G."/>
            <person name="Wang F."/>
            <person name="Ye M."/>
            <person name="Wang L."/>
            <person name="Zou H."/>
        </authorList>
    </citation>
    <scope>GLYCOSYLATION [LARGE SCALE ANALYSIS] AT ASN-750</scope>
    <source>
        <tissue>Liver</tissue>
    </source>
</reference>
<reference key="21">
    <citation type="journal article" date="2009" name="Mol. Cell. Proteomics">
        <title>A strategy for precise and large scale identification of core fucosylated glycoproteins.</title>
        <authorList>
            <person name="Jia W."/>
            <person name="Lu Z."/>
            <person name="Fu Y."/>
            <person name="Wang H.P."/>
            <person name="Wang L.H."/>
            <person name="Chi H."/>
            <person name="Yuan Z.F."/>
            <person name="Zheng Z.B."/>
            <person name="Song L.N."/>
            <person name="Han H.H."/>
            <person name="Liang Y.M."/>
            <person name="Wang J.L."/>
            <person name="Cai Y."/>
            <person name="Zhang Y.K."/>
            <person name="Deng Y.L."/>
            <person name="Ying W.T."/>
            <person name="He S.M."/>
            <person name="Qian X.H."/>
        </authorList>
    </citation>
    <scope>GLYCOSYLATION AT ASN-285</scope>
</reference>
<reference key="22">
    <citation type="journal article" date="2014" name="J. Proteomics">
        <title>An enzyme assisted RP-RPLC approach for in-depth analysis of human liver phosphoproteome.</title>
        <authorList>
            <person name="Bian Y."/>
            <person name="Song C."/>
            <person name="Cheng K."/>
            <person name="Dong M."/>
            <person name="Wang F."/>
            <person name="Huang J."/>
            <person name="Sun D."/>
            <person name="Wang L."/>
            <person name="Ye M."/>
            <person name="Zou H."/>
        </authorList>
    </citation>
    <scope>PHOSPHORYLATION [LARGE SCALE ANALYSIS] AT SER-129</scope>
    <scope>IDENTIFICATION BY MASS SPECTROMETRY [LARGE SCALE ANALYSIS]</scope>
    <source>
        <tissue>Liver</tissue>
    </source>
</reference>
<reference key="23">
    <citation type="journal article" date="2015" name="J. Biol. Chem.">
        <title>Metal Ion-dependent Heavy Chain Transfer Activity of TSG-6 Mediates Assembly of the Cumulus-Oocyte Matrix.</title>
        <authorList>
            <person name="Briggs D.C."/>
            <person name="Birchenough H.L."/>
            <person name="Ali T."/>
            <person name="Rugg M.S."/>
            <person name="Waltho J.P."/>
            <person name="Ievoli E."/>
            <person name="Jowitt T.A."/>
            <person name="Enghild J.J."/>
            <person name="Richter R.P."/>
            <person name="Salustri A."/>
            <person name="Milner C.M."/>
            <person name="Day A.J."/>
        </authorList>
    </citation>
    <scope>INTERACTION WITH ITIH1</scope>
    <scope>MUTAGENESIS OF ASP-298</scope>
</reference>
<reference key="24">
    <citation type="journal article" date="1995" name="Hum. Genet.">
        <title>Molecular basis of inter-alpha-trypsin inhibitor heavy chain H1 (ITIH1) polymorphism.</title>
        <authorList>
            <person name="Ding M."/>
            <person name="Umetsu K."/>
            <person name="Yuasa I."/>
            <person name="Sato M."/>
            <person name="Harada A."/>
            <person name="Suzuki T."/>
        </authorList>
    </citation>
    <scope>VARIANTS VAL-585 AND ARG-595</scope>
</reference>
<organism>
    <name type="scientific">Homo sapiens</name>
    <name type="common">Human</name>
    <dbReference type="NCBI Taxonomy" id="9606"/>
    <lineage>
        <taxon>Eukaryota</taxon>
        <taxon>Metazoa</taxon>
        <taxon>Chordata</taxon>
        <taxon>Craniata</taxon>
        <taxon>Vertebrata</taxon>
        <taxon>Euteleostomi</taxon>
        <taxon>Mammalia</taxon>
        <taxon>Eutheria</taxon>
        <taxon>Euarchontoglires</taxon>
        <taxon>Primates</taxon>
        <taxon>Haplorrhini</taxon>
        <taxon>Catarrhini</taxon>
        <taxon>Hominidae</taxon>
        <taxon>Homo</taxon>
    </lineage>
</organism>
<comment type="function">
    <text>May act as a carrier of hyaluronan in serum or as a binding protein between hyaluronan and other matrix protein, including those on cell surfaces in tissues to regulate the localization, synthesis and degradation of hyaluronan which are essential to cells undergoing biological processes.</text>
</comment>
<comment type="function">
    <text>Contains a potential peptide which could stimulate a broad spectrum of phagocytotic cells.</text>
</comment>
<comment type="subunit">
    <text evidence="10 11">I-alpha-I plasma protease inhibitors are assembled from one or two heavy chains (HC) and one light chain, bikunin. Inter-alpha-inhibitor (I-alpha-I) is composed of ITIH1/HC1, ITIH2/HC2 and bikunin (PubMed:2476436). Interacts with TNFAIP6 (via Link and CUB domains) (PubMed:26468290).</text>
</comment>
<comment type="subcellular location">
    <subcellularLocation>
        <location>Secreted</location>
    </subcellularLocation>
</comment>
<comment type="alternative products">
    <event type="alternative splicing"/>
    <isoform>
        <id>P19827-1</id>
        <name>1</name>
        <sequence type="displayed"/>
    </isoform>
    <isoform>
        <id>P19827-2</id>
        <name>2</name>
        <sequence type="described" ref="VSP_045420"/>
    </isoform>
    <isoform>
        <id>P19827-3</id>
        <name>3</name>
        <sequence type="described" ref="VSP_045419"/>
    </isoform>
</comment>
<comment type="PTM">
    <text>Heavy chains are linked to bikunin via chondroitin 4-sulfate esterified to the alpha-carboxyl of the C-terminal aspartate after propeptide cleavage.</text>
</comment>
<comment type="PTM">
    <text evidence="4 7 8 9 13 14">The S-linked glycan is composed of two 6-carbon sugars, possibly Glc or Gal.</text>
</comment>
<comment type="mass spectrometry"/>
<comment type="polymorphism">
    <text>There are 3 common alleles; ITIH1*1 with Glu-585/Gln-595, ITIH1*2 with Val-585/Arg-595 and ITIH1*3 with Glu-585/Arg-595.</text>
</comment>
<comment type="similarity">
    <text evidence="16">Belongs to the ITIH family.</text>
</comment>
<keyword id="KW-0002">3D-structure</keyword>
<keyword id="KW-0025">Alternative splicing</keyword>
<keyword id="KW-0903">Direct protein sequencing</keyword>
<keyword id="KW-1015">Disulfide bond</keyword>
<keyword id="KW-0325">Glycoprotein</keyword>
<keyword id="KW-0597">Phosphoprotein</keyword>
<keyword id="KW-0646">Protease inhibitor</keyword>
<keyword id="KW-0654">Proteoglycan</keyword>
<keyword id="KW-1267">Proteomics identification</keyword>
<keyword id="KW-1185">Reference proteome</keyword>
<keyword id="KW-0964">Secreted</keyword>
<keyword id="KW-0722">Serine protease inhibitor</keyword>
<keyword id="KW-0732">Signal</keyword>
<evidence type="ECO:0000255" key="1"/>
<evidence type="ECO:0000255" key="2">
    <source>
        <dbReference type="PROSITE-ProRule" id="PRU00219"/>
    </source>
</evidence>
<evidence type="ECO:0000255" key="3">
    <source>
        <dbReference type="PROSITE-ProRule" id="PRU00801"/>
    </source>
</evidence>
<evidence type="ECO:0000269" key="4">
    <source>
    </source>
</evidence>
<evidence type="ECO:0000269" key="5">
    <source>
    </source>
</evidence>
<evidence type="ECO:0000269" key="6">
    <source>
    </source>
</evidence>
<evidence type="ECO:0000269" key="7">
    <source>
    </source>
</evidence>
<evidence type="ECO:0000269" key="8">
    <source>
    </source>
</evidence>
<evidence type="ECO:0000269" key="9">
    <source>
    </source>
</evidence>
<evidence type="ECO:0000269" key="10">
    <source>
    </source>
</evidence>
<evidence type="ECO:0000269" key="11">
    <source>
    </source>
</evidence>
<evidence type="ECO:0000269" key="12">
    <source>
    </source>
</evidence>
<evidence type="ECO:0000269" key="13">
    <source>
    </source>
</evidence>
<evidence type="ECO:0000269" key="14">
    <source>
    </source>
</evidence>
<evidence type="ECO:0000303" key="15">
    <source>
    </source>
</evidence>
<evidence type="ECO:0000305" key="16"/>
<evidence type="ECO:0007744" key="17">
    <source>
    </source>
</evidence>
<evidence type="ECO:0007744" key="18">
    <source>
    </source>
</evidence>
<evidence type="ECO:0007829" key="19">
    <source>
        <dbReference type="PDB" id="6FPY"/>
    </source>
</evidence>
<evidence type="ECO:0007829" key="20">
    <source>
        <dbReference type="PDB" id="6FPZ"/>
    </source>
</evidence>
<name>ITIH1_HUMAN</name>
<sequence>MDGAMGPRGLLLCMYLVSLLILQAMPALGSATGRSKSSEKRQAVDTAVDGVFIRSLKVNCKVTSRFAHYVVTSQVVNTANEAREVAFDLEIPKTAFISDFAVTADGNAFIGDIKDKVTAWKQYRKAAISGENAGLVRASGRTMEQFTIHLTVNPQSKVTFQLTYEEVLKRNHMQYEIVIKVKPKQLVHHFEIDVDIFEPQGISKLDAQASFLPKELAAQTIKKSFSGKKGHVLFRPTVSQQQSCPTCSTSLLNGHFKVTYDVSRDKICDLLVANNHFAHFFAPQNLTNMNKNVVFVIDISGSMRGQKVKQTKEALLKILGDMQPGDYFDLVLFGTRVQSWKGSLVQASEANLQAAQDFVRGFSLDEATNLNGGLLRGIEILNQVQESLPELSNHASILIMLTDGDPTEGVTDRSQILKNVRNAIRGRFPLYNLGFGHNVDFNFLEVMSMENNGRAQRIYEDHDATQQLQGFYSQVAKPLLVDVDLQYPQDAVLALTQNHHKQYYEGSEIVVAGRIADNKQSSFKADVQAHGEGQEFSITCLVDEEEMKKLLRERGHMLENHVERLWAYLTIQELLAKRMKVDREERANLSSQALQMSLDYGFVTPLTSMSIRGMADQDGLKPTIDKPSEDSPPLEMLGPRRTFVLSALQPSPTHSSSNTQRLPDRVTGVDTDPHFIIHVPQKEDTLCFNINEEPGVILSLVQDPNTGFSVNGQLIGNKARSPGQHDGTYFGRLGIANPATDFQLEVTPQNITLNPGFGGPVFSWRDQAVLRQDGVVVTINKKRNLVVSVDDGGTFEVVLHRVWKGSSVHQDFLGFYVLDSHRMSARTHGLLGQFFHPIGFEVSDIHPGSDPTKPDATMVVRNRRLTVTRGLQKDYSKDPWHGAEVSCWFIHNNGAGLIDGAYTDYIVPDIF</sequence>
<feature type="signal peptide" evidence="1">
    <location>
        <begin position="1"/>
        <end position="27"/>
    </location>
</feature>
<feature type="propeptide" id="PRO_0000016506" evidence="10">
    <location>
        <begin position="28"/>
        <end position="34"/>
    </location>
</feature>
<feature type="chain" id="PRO_0000016507" description="Inter-alpha-trypsin inhibitor heavy chain H1">
    <location>
        <begin position="35"/>
        <end position="672"/>
    </location>
</feature>
<feature type="propeptide" id="PRO_0000016508">
    <location>
        <begin position="673"/>
        <end position="911"/>
    </location>
</feature>
<feature type="domain" description="VIT" evidence="3">
    <location>
        <begin position="37"/>
        <end position="166"/>
    </location>
</feature>
<feature type="domain" description="VWFA" evidence="2">
    <location>
        <begin position="290"/>
        <end position="450"/>
    </location>
</feature>
<feature type="region of interest" description="Hyaluronan-binding">
    <location>
        <begin position="387"/>
        <end position="911"/>
    </location>
</feature>
<feature type="short sequence motif" description="Phagocytosis uptake signal" evidence="1">
    <location>
        <begin position="181"/>
        <end position="184"/>
    </location>
</feature>
<feature type="modified residue" description="Phosphoserine" evidence="18">
    <location>
        <position position="129"/>
    </location>
</feature>
<feature type="modified residue" description="Phosphothreonine" evidence="17">
    <location>
        <position position="402"/>
    </location>
</feature>
<feature type="modified residue" description="Phosphothreonine" evidence="17">
    <location>
        <position position="407"/>
    </location>
</feature>
<feature type="modified residue" description="Aspartate 1-(chondroitin 4-sulfate)-ester">
    <location>
        <position position="672"/>
    </location>
</feature>
<feature type="glycosylation site" description="S-linked (Hex...) cysteine" evidence="13">
    <location>
        <position position="60"/>
    </location>
</feature>
<feature type="glycosylation site" id="CAR_000138" description="N-linked (GlcNAc...) (complex) asparagine" evidence="4 8 13 14">
    <location>
        <position position="285"/>
    </location>
</feature>
<feature type="glycosylation site" id="CAR_000139" description="N-linked (GlcNAc...) (complex) asparagine" evidence="7 13 14">
    <location>
        <position position="588"/>
    </location>
</feature>
<feature type="glycosylation site" id="CAR_000213" description="O-linked (GalNAc...) threonine" evidence="13">
    <location>
        <position position="653"/>
    </location>
</feature>
<feature type="glycosylation site" description="N-linked (GlcNAc...) asparagine" evidence="9">
    <location>
        <position position="750"/>
    </location>
</feature>
<feature type="disulfide bond" evidence="13">
    <location>
        <begin position="244"/>
        <end position="247"/>
    </location>
</feature>
<feature type="disulfide bond" evidence="13">
    <location>
        <begin position="268"/>
        <end position="540"/>
    </location>
</feature>
<feature type="splice variant" id="VSP_045419" description="In isoform 3." evidence="15">
    <location>
        <begin position="1"/>
        <end position="288"/>
    </location>
</feature>
<feature type="splice variant" id="VSP_045420" description="In isoform 2." evidence="15">
    <location>
        <begin position="1"/>
        <end position="142"/>
    </location>
</feature>
<feature type="sequence variant" id="VAR_011873" description="In dbSNP:rs1042777." evidence="5">
    <original>S</original>
    <variation>T</variation>
    <location>
        <position position="263"/>
    </location>
</feature>
<feature type="sequence variant" id="VAR_004019" description="In allele ITIH1*2; dbSNP:rs678." evidence="5 6 12">
    <original>E</original>
    <variation>V</variation>
    <location>
        <position position="585"/>
    </location>
</feature>
<feature type="sequence variant" id="VAR_004020" description="In allele ITIH1*2 and allele ITIH1*3; dbSNP:rs1042779." evidence="5 6 12">
    <original>Q</original>
    <variation>R</variation>
    <location>
        <position position="595"/>
    </location>
</feature>
<feature type="sequence variant" id="VAR_011874" description="In dbSNP:rs1042904.">
    <original>G</original>
    <variation>C</variation>
    <location>
        <position position="695"/>
    </location>
</feature>
<feature type="sequence variant" id="VAR_011875" description="In dbSNP:rs1042849.">
    <original>D</original>
    <variation>E</variation>
    <location>
        <position position="844"/>
    </location>
</feature>
<feature type="mutagenesis site" description="Abolishes binding to CUB domain of TNFAIP6." evidence="11">
    <original>D</original>
    <variation>A</variation>
    <location>
        <position position="298"/>
    </location>
</feature>
<feature type="sequence conflict" description="In Ref. 8; AA sequence." evidence="16" ref="8">
    <original>V</original>
    <variation>T</variation>
    <location>
        <position position="51"/>
    </location>
</feature>
<feature type="sequence conflict" description="In Ref. 8; AA sequence." evidence="16" ref="8">
    <original>R</original>
    <variation>A</variation>
    <location>
        <position position="54"/>
    </location>
</feature>
<feature type="sequence conflict" description="In Ref. 1; CAA45188." evidence="16" ref="1">
    <original>K</original>
    <variation>E</variation>
    <location>
        <position position="266"/>
    </location>
</feature>
<feature type="sequence conflict" description="In Ref. 3; BAH12794." evidence="16" ref="3">
    <original>T</original>
    <variation>A</variation>
    <location>
        <position position="539"/>
    </location>
</feature>
<feature type="sequence conflict" description="In Ref. 3; BAH12794." evidence="16" ref="3">
    <original>V</original>
    <variation>A</variation>
    <location>
        <position position="798"/>
    </location>
</feature>
<feature type="strand" evidence="20">
    <location>
        <begin position="51"/>
        <end position="63"/>
    </location>
</feature>
<feature type="strand" evidence="20">
    <location>
        <begin position="66"/>
        <end position="77"/>
    </location>
</feature>
<feature type="strand" evidence="20">
    <location>
        <begin position="79"/>
        <end position="81"/>
    </location>
</feature>
<feature type="strand" evidence="20">
    <location>
        <begin position="83"/>
        <end position="92"/>
    </location>
</feature>
<feature type="strand" evidence="20">
    <location>
        <begin position="96"/>
        <end position="104"/>
    </location>
</feature>
<feature type="strand" evidence="20">
    <location>
        <begin position="107"/>
        <end position="115"/>
    </location>
</feature>
<feature type="helix" evidence="20">
    <location>
        <begin position="116"/>
        <end position="119"/>
    </location>
</feature>
<feature type="helix" evidence="20">
    <location>
        <begin position="121"/>
        <end position="123"/>
    </location>
</feature>
<feature type="strand" evidence="20">
    <location>
        <begin position="124"/>
        <end position="128"/>
    </location>
</feature>
<feature type="helix" evidence="20">
    <location>
        <begin position="130"/>
        <end position="133"/>
    </location>
</feature>
<feature type="strand" evidence="20">
    <location>
        <begin position="135"/>
        <end position="138"/>
    </location>
</feature>
<feature type="strand" evidence="20">
    <location>
        <begin position="140"/>
        <end position="152"/>
    </location>
</feature>
<feature type="strand" evidence="20">
    <location>
        <begin position="156"/>
        <end position="167"/>
    </location>
</feature>
<feature type="strand" evidence="20">
    <location>
        <begin position="172"/>
        <end position="181"/>
    </location>
</feature>
<feature type="strand" evidence="20">
    <location>
        <begin position="187"/>
        <end position="197"/>
    </location>
</feature>
<feature type="strand" evidence="20">
    <location>
        <begin position="202"/>
        <end position="209"/>
    </location>
</feature>
<feature type="helix" evidence="20">
    <location>
        <begin position="214"/>
        <end position="220"/>
    </location>
</feature>
<feature type="strand" evidence="20">
    <location>
        <begin position="221"/>
        <end position="226"/>
    </location>
</feature>
<feature type="strand" evidence="20">
    <location>
        <begin position="229"/>
        <end position="234"/>
    </location>
</feature>
<feature type="helix" evidence="20">
    <location>
        <begin position="238"/>
        <end position="241"/>
    </location>
</feature>
<feature type="strand" evidence="20">
    <location>
        <begin position="242"/>
        <end position="244"/>
    </location>
</feature>
<feature type="strand" evidence="19">
    <location>
        <begin position="248"/>
        <end position="250"/>
    </location>
</feature>
<feature type="strand" evidence="20">
    <location>
        <begin position="254"/>
        <end position="262"/>
    </location>
</feature>
<feature type="strand" evidence="20">
    <location>
        <begin position="265"/>
        <end position="267"/>
    </location>
</feature>
<feature type="strand" evidence="20">
    <location>
        <begin position="269"/>
        <end position="273"/>
    </location>
</feature>
<feature type="strand" evidence="20">
    <location>
        <begin position="276"/>
        <end position="281"/>
    </location>
</feature>
<feature type="strand" evidence="20">
    <location>
        <begin position="291"/>
        <end position="298"/>
    </location>
</feature>
<feature type="helix" evidence="20">
    <location>
        <begin position="301"/>
        <end position="303"/>
    </location>
</feature>
<feature type="helix" evidence="20">
    <location>
        <begin position="306"/>
        <end position="321"/>
    </location>
</feature>
<feature type="strand" evidence="20">
    <location>
        <begin position="327"/>
        <end position="343"/>
    </location>
</feature>
<feature type="helix" evidence="20">
    <location>
        <begin position="349"/>
        <end position="361"/>
    </location>
</feature>
<feature type="helix" evidence="20">
    <location>
        <begin position="370"/>
        <end position="386"/>
    </location>
</feature>
<feature type="helix" evidence="20">
    <location>
        <begin position="389"/>
        <end position="391"/>
    </location>
</feature>
<feature type="strand" evidence="20">
    <location>
        <begin position="394"/>
        <end position="404"/>
    </location>
</feature>
<feature type="helix" evidence="20">
    <location>
        <begin position="413"/>
        <end position="424"/>
    </location>
</feature>
<feature type="strand" evidence="20">
    <location>
        <begin position="430"/>
        <end position="439"/>
    </location>
</feature>
<feature type="helix" evidence="20">
    <location>
        <begin position="441"/>
        <end position="449"/>
    </location>
</feature>
<feature type="turn" evidence="20">
    <location>
        <begin position="450"/>
        <end position="452"/>
    </location>
</feature>
<feature type="strand" evidence="20">
    <location>
        <begin position="455"/>
        <end position="458"/>
    </location>
</feature>
<feature type="helix" evidence="20">
    <location>
        <begin position="464"/>
        <end position="475"/>
    </location>
</feature>
<feature type="strand" evidence="20">
    <location>
        <begin position="478"/>
        <end position="486"/>
    </location>
</feature>
<feature type="turn" evidence="20">
    <location>
        <begin position="489"/>
        <end position="491"/>
    </location>
</feature>
<feature type="strand" evidence="20">
    <location>
        <begin position="492"/>
        <end position="495"/>
    </location>
</feature>
<feature type="strand" evidence="20">
    <location>
        <begin position="499"/>
        <end position="504"/>
    </location>
</feature>
<feature type="strand" evidence="20">
    <location>
        <begin position="509"/>
        <end position="515"/>
    </location>
</feature>
<feature type="strand" evidence="20">
    <location>
        <begin position="524"/>
        <end position="531"/>
    </location>
</feature>
<feature type="strand" evidence="20">
    <location>
        <begin position="534"/>
        <end position="541"/>
    </location>
</feature>
<feature type="helix" evidence="20">
    <location>
        <begin position="544"/>
        <end position="554"/>
    </location>
</feature>
<feature type="helix" evidence="20">
    <location>
        <begin position="557"/>
        <end position="578"/>
    </location>
</feature>
<feature type="helix" evidence="20">
    <location>
        <begin position="583"/>
        <end position="600"/>
    </location>
</feature>
<feature type="strand" evidence="20">
    <location>
        <begin position="607"/>
        <end position="611"/>
    </location>
</feature>
<feature type="strand" evidence="20">
    <location>
        <begin position="643"/>
        <end position="645"/>
    </location>
</feature>
<gene>
    <name type="primary">ITIH1</name>
    <name type="synonym">IGHEP1</name>
</gene>
<proteinExistence type="evidence at protein level"/>